<proteinExistence type="evidence at transcript level"/>
<accession>Q89707</accession>
<reference key="1">
    <citation type="journal article" date="1996" name="Arch. Virol.">
        <title>Genes for fowl adenovirus CELO penton base and core polypeptides.</title>
        <authorList>
            <person name="Akopian T.A."/>
            <person name="Lazareva S.E."/>
            <person name="Tikhomirov E.E."/>
            <person name="Karpov V.A."/>
            <person name="Naroditsky B.S."/>
        </authorList>
    </citation>
    <scope>NUCLEOTIDE SEQUENCE [GENOMIC DNA]</scope>
</reference>
<reference key="2">
    <citation type="journal article" date="1996" name="J. Virol.">
        <title>The complete DNA sequence and genomic organization of the avian adenovirus CELO.</title>
        <authorList>
            <person name="Chiocca S."/>
            <person name="Kurzbauer R."/>
            <person name="Schaffner G."/>
            <person name="Baker A."/>
            <person name="Mautner V."/>
            <person name="Cotten M."/>
        </authorList>
    </citation>
    <scope>NUCLEOTIDE SEQUENCE [LARGE SCALE GENOMIC DNA]</scope>
</reference>
<evidence type="ECO:0000250" key="1"/>
<evidence type="ECO:0000305" key="2"/>
<comment type="function">
    <text evidence="1">Strongly bound to viral DNA and responsible for wrapping and condensing the viral DNA. Probably promotes viral genome import into the nucleus and is still associated with the viral DNA when the latter enters into the host nucleus (By similarity).</text>
</comment>
<comment type="subunit">
    <text evidence="1">Interacts with the core-capsid bridging protein; this interaction bridges the virus core to the capsid.</text>
</comment>
<comment type="subcellular location">
    <molecule>Pre-histone-like nucleoprotein</molecule>
    <subcellularLocation>
        <location evidence="1">Host nucleus</location>
        <location evidence="1">Host nucleolus</location>
    </subcellularLocation>
</comment>
<comment type="subcellular location">
    <molecule>Histone-like nucleoprotein</molecule>
    <subcellularLocation>
        <location evidence="1">Virion</location>
    </subcellularLocation>
    <text evidence="1">Located inside the capsid in association with the viral DNA (core). Present in about 1070 copies per virion (By similarity).</text>
</comment>
<comment type="induction">
    <text>Expressed in the late phase of the viral replicative cycle.</text>
</comment>
<comment type="PTM">
    <text evidence="1">Cleaved near the N-terminus by the viral protease during virion maturation to form the mature protein.</text>
</comment>
<comment type="miscellaneous">
    <text evidence="1">All late proteins expressed from the major late promoter are produced by alternative splicing and alternative polyadenylation of the same gene giving rise to non-overlapping ORFs. A leader sequence is present in the N-terminus of all these mRNAs and is recognized by the viral shutoff protein to provide expression although conventional translation via ribosome scanning from the cap has been shut off in the host cell (By similarity).</text>
</comment>
<comment type="similarity">
    <text evidence="2">Belongs to the adenoviridae histone-like nucleoprotein family.</text>
</comment>
<protein>
    <recommendedName>
        <fullName>Pre-histone-like nucleoprotein</fullName>
    </recommendedName>
    <alternativeName>
        <fullName>Pre-core protein VII</fullName>
        <shortName>pVII</shortName>
    </alternativeName>
    <component>
        <recommendedName>
            <fullName>Histone-like nucleoprotein</fullName>
            <shortName>NP</shortName>
        </recommendedName>
        <alternativeName>
            <fullName>Core protein VII</fullName>
        </alternativeName>
    </component>
</protein>
<organismHost>
    <name type="scientific">Galliformes</name>
    <dbReference type="NCBI Taxonomy" id="8976"/>
</organismHost>
<organism>
    <name type="scientific">Fowl adenovirus A serotype 1 (strain CELO / Phelps)</name>
    <name type="common">FAdV-1</name>
    <name type="synonym">Avian adenovirus gal1 (strain Phelps)</name>
    <dbReference type="NCBI Taxonomy" id="10553"/>
    <lineage>
        <taxon>Viruses</taxon>
        <taxon>Varidnaviria</taxon>
        <taxon>Bamfordvirae</taxon>
        <taxon>Preplasmiviricota</taxon>
        <taxon>Tectiliviricetes</taxon>
        <taxon>Rowavirales</taxon>
        <taxon>Adenoviridae</taxon>
        <taxon>Aviadenovirus</taxon>
        <taxon>Fowl aviadenovirus A</taxon>
    </lineage>
</organism>
<sequence>MSILISPSDNRGWGANMRYRRRASMRGVGRRRLTLRQLLGLGSRRRRRSRPTTVSNRLVVVSTRRRSSRRRR</sequence>
<feature type="initiator methionine" description="Removed" evidence="1">
    <location>
        <position position="1"/>
    </location>
</feature>
<feature type="chain" id="PRO_0000421441" description="Pre-histone-like nucleoprotein" evidence="1">
    <location>
        <begin position="2"/>
        <end position="72"/>
    </location>
</feature>
<feature type="propeptide" id="PRO_0000036593" evidence="1">
    <location>
        <begin position="2"/>
        <end position="14"/>
    </location>
</feature>
<feature type="chain" id="PRO_0000036594" description="Histone-like nucleoprotein" evidence="1">
    <location>
        <begin position="15"/>
        <end position="72"/>
    </location>
</feature>
<feature type="site" description="Cleavage; by adenovirus protease">
    <location>
        <begin position="14"/>
        <end position="15"/>
    </location>
</feature>
<feature type="modified residue" description="N-acetylserine; by host" evidence="1">
    <location>
        <position position="2"/>
    </location>
</feature>
<name>NP_ADEG1</name>
<keyword id="KW-0007">Acetylation</keyword>
<keyword id="KW-0238">DNA-binding</keyword>
<keyword id="KW-1048">Host nucleus</keyword>
<keyword id="KW-0426">Late protein</keyword>
<keyword id="KW-1185">Reference proteome</keyword>
<keyword id="KW-1163">Viral penetration into host nucleus</keyword>
<keyword id="KW-0946">Virion</keyword>
<keyword id="KW-1160">Virus entry into host cell</keyword>
<dbReference type="EMBL" id="Z48167">
    <property type="protein sequence ID" value="CAA88182.1"/>
    <property type="molecule type" value="Genomic_DNA"/>
</dbReference>
<dbReference type="EMBL" id="U46933">
    <property type="protein sequence ID" value="AAC54909.1"/>
    <property type="molecule type" value="Genomic_DNA"/>
</dbReference>
<dbReference type="PIR" id="S52322">
    <property type="entry name" value="S52322"/>
</dbReference>
<dbReference type="RefSeq" id="NP_043883.1">
    <property type="nucleotide sequence ID" value="NC_001720.1"/>
</dbReference>
<dbReference type="GeneID" id="1476561"/>
<dbReference type="Proteomes" id="UP000001594">
    <property type="component" value="Segment"/>
</dbReference>
<dbReference type="GO" id="GO:0043657">
    <property type="term" value="C:host cell"/>
    <property type="evidence" value="ECO:0007669"/>
    <property type="project" value="GOC"/>
</dbReference>
<dbReference type="GO" id="GO:0044196">
    <property type="term" value="C:host cell nucleolus"/>
    <property type="evidence" value="ECO:0007669"/>
    <property type="project" value="UniProtKB-SubCell"/>
</dbReference>
<dbReference type="GO" id="GO:0019028">
    <property type="term" value="C:viral capsid"/>
    <property type="evidence" value="ECO:0007669"/>
    <property type="project" value="InterPro"/>
</dbReference>
<dbReference type="GO" id="GO:0003677">
    <property type="term" value="F:DNA binding"/>
    <property type="evidence" value="ECO:0007669"/>
    <property type="project" value="UniProtKB-KW"/>
</dbReference>
<dbReference type="GO" id="GO:0046718">
    <property type="term" value="P:symbiont entry into host cell"/>
    <property type="evidence" value="ECO:0007669"/>
    <property type="project" value="UniProtKB-KW"/>
</dbReference>
<dbReference type="GO" id="GO:0075732">
    <property type="term" value="P:viral penetration into host nucleus"/>
    <property type="evidence" value="ECO:0007669"/>
    <property type="project" value="UniProtKB-KW"/>
</dbReference>
<dbReference type="InterPro" id="IPR004912">
    <property type="entry name" value="Adeno_VII"/>
</dbReference>
<dbReference type="Pfam" id="PF03228">
    <property type="entry name" value="Adeno_VII"/>
    <property type="match status" value="1"/>
</dbReference>